<feature type="chain" id="PRO_1000087856" description="Proline--tRNA ligase">
    <location>
        <begin position="1"/>
        <end position="567"/>
    </location>
</feature>
<accession>A6U182</accession>
<proteinExistence type="inferred from homology"/>
<dbReference type="EC" id="6.1.1.15" evidence="1"/>
<dbReference type="EMBL" id="CP000736">
    <property type="protein sequence ID" value="ABR52200.1"/>
    <property type="molecule type" value="Genomic_DNA"/>
</dbReference>
<dbReference type="SMR" id="A6U182"/>
<dbReference type="KEGG" id="sah:SaurJH1_1349"/>
<dbReference type="HOGENOM" id="CLU_016739_0_0_9"/>
<dbReference type="GO" id="GO:0005829">
    <property type="term" value="C:cytosol"/>
    <property type="evidence" value="ECO:0007669"/>
    <property type="project" value="TreeGrafter"/>
</dbReference>
<dbReference type="GO" id="GO:0002161">
    <property type="term" value="F:aminoacyl-tRNA deacylase activity"/>
    <property type="evidence" value="ECO:0007669"/>
    <property type="project" value="InterPro"/>
</dbReference>
<dbReference type="GO" id="GO:0005524">
    <property type="term" value="F:ATP binding"/>
    <property type="evidence" value="ECO:0007669"/>
    <property type="project" value="UniProtKB-UniRule"/>
</dbReference>
<dbReference type="GO" id="GO:0140096">
    <property type="term" value="F:catalytic activity, acting on a protein"/>
    <property type="evidence" value="ECO:0007669"/>
    <property type="project" value="UniProtKB-ARBA"/>
</dbReference>
<dbReference type="GO" id="GO:0004827">
    <property type="term" value="F:proline-tRNA ligase activity"/>
    <property type="evidence" value="ECO:0007669"/>
    <property type="project" value="UniProtKB-UniRule"/>
</dbReference>
<dbReference type="GO" id="GO:0016740">
    <property type="term" value="F:transferase activity"/>
    <property type="evidence" value="ECO:0007669"/>
    <property type="project" value="UniProtKB-ARBA"/>
</dbReference>
<dbReference type="GO" id="GO:0006433">
    <property type="term" value="P:prolyl-tRNA aminoacylation"/>
    <property type="evidence" value="ECO:0007669"/>
    <property type="project" value="UniProtKB-UniRule"/>
</dbReference>
<dbReference type="CDD" id="cd04334">
    <property type="entry name" value="ProRS-INS"/>
    <property type="match status" value="1"/>
</dbReference>
<dbReference type="CDD" id="cd00861">
    <property type="entry name" value="ProRS_anticodon_short"/>
    <property type="match status" value="1"/>
</dbReference>
<dbReference type="CDD" id="cd00779">
    <property type="entry name" value="ProRS_core_prok"/>
    <property type="match status" value="1"/>
</dbReference>
<dbReference type="FunFam" id="3.30.930.10:FF:000043">
    <property type="entry name" value="Proline--tRNA ligase"/>
    <property type="match status" value="1"/>
</dbReference>
<dbReference type="FunFam" id="3.40.50.800:FF:000011">
    <property type="entry name" value="Proline--tRNA ligase"/>
    <property type="match status" value="1"/>
</dbReference>
<dbReference type="Gene3D" id="3.40.50.800">
    <property type="entry name" value="Anticodon-binding domain"/>
    <property type="match status" value="1"/>
</dbReference>
<dbReference type="Gene3D" id="3.30.930.10">
    <property type="entry name" value="Bira Bifunctional Protein, Domain 2"/>
    <property type="match status" value="2"/>
</dbReference>
<dbReference type="Gene3D" id="3.90.960.10">
    <property type="entry name" value="YbaK/aminoacyl-tRNA synthetase-associated domain"/>
    <property type="match status" value="1"/>
</dbReference>
<dbReference type="HAMAP" id="MF_01569">
    <property type="entry name" value="Pro_tRNA_synth_type1"/>
    <property type="match status" value="1"/>
</dbReference>
<dbReference type="InterPro" id="IPR002314">
    <property type="entry name" value="aa-tRNA-synt_IIb"/>
</dbReference>
<dbReference type="InterPro" id="IPR006195">
    <property type="entry name" value="aa-tRNA-synth_II"/>
</dbReference>
<dbReference type="InterPro" id="IPR045864">
    <property type="entry name" value="aa-tRNA-synth_II/BPL/LPL"/>
</dbReference>
<dbReference type="InterPro" id="IPR004154">
    <property type="entry name" value="Anticodon-bd"/>
</dbReference>
<dbReference type="InterPro" id="IPR036621">
    <property type="entry name" value="Anticodon-bd_dom_sf"/>
</dbReference>
<dbReference type="InterPro" id="IPR002316">
    <property type="entry name" value="Pro-tRNA-ligase_IIa"/>
</dbReference>
<dbReference type="InterPro" id="IPR004500">
    <property type="entry name" value="Pro-tRNA-synth_IIa_bac-type"/>
</dbReference>
<dbReference type="InterPro" id="IPR023717">
    <property type="entry name" value="Pro-tRNA-Synthase_IIa_type1"/>
</dbReference>
<dbReference type="InterPro" id="IPR050062">
    <property type="entry name" value="Pro-tRNA_synthetase"/>
</dbReference>
<dbReference type="InterPro" id="IPR044140">
    <property type="entry name" value="ProRS_anticodon_short"/>
</dbReference>
<dbReference type="InterPro" id="IPR033730">
    <property type="entry name" value="ProRS_core_prok"/>
</dbReference>
<dbReference type="InterPro" id="IPR036754">
    <property type="entry name" value="YbaK/aa-tRNA-synt-asso_dom_sf"/>
</dbReference>
<dbReference type="InterPro" id="IPR007214">
    <property type="entry name" value="YbaK/aa-tRNA-synth-assoc-dom"/>
</dbReference>
<dbReference type="NCBIfam" id="NF006625">
    <property type="entry name" value="PRK09194.1"/>
    <property type="match status" value="1"/>
</dbReference>
<dbReference type="NCBIfam" id="TIGR00409">
    <property type="entry name" value="proS_fam_II"/>
    <property type="match status" value="1"/>
</dbReference>
<dbReference type="PANTHER" id="PTHR42753">
    <property type="entry name" value="MITOCHONDRIAL RIBOSOME PROTEIN L39/PROLYL-TRNA LIGASE FAMILY MEMBER"/>
    <property type="match status" value="1"/>
</dbReference>
<dbReference type="PANTHER" id="PTHR42753:SF2">
    <property type="entry name" value="PROLINE--TRNA LIGASE"/>
    <property type="match status" value="1"/>
</dbReference>
<dbReference type="Pfam" id="PF03129">
    <property type="entry name" value="HGTP_anticodon"/>
    <property type="match status" value="1"/>
</dbReference>
<dbReference type="Pfam" id="PF00587">
    <property type="entry name" value="tRNA-synt_2b"/>
    <property type="match status" value="1"/>
</dbReference>
<dbReference type="Pfam" id="PF04073">
    <property type="entry name" value="tRNA_edit"/>
    <property type="match status" value="1"/>
</dbReference>
<dbReference type="PRINTS" id="PR01046">
    <property type="entry name" value="TRNASYNTHPRO"/>
</dbReference>
<dbReference type="SUPFAM" id="SSF52954">
    <property type="entry name" value="Class II aaRS ABD-related"/>
    <property type="match status" value="1"/>
</dbReference>
<dbReference type="SUPFAM" id="SSF55681">
    <property type="entry name" value="Class II aaRS and biotin synthetases"/>
    <property type="match status" value="1"/>
</dbReference>
<dbReference type="SUPFAM" id="SSF55826">
    <property type="entry name" value="YbaK/ProRS associated domain"/>
    <property type="match status" value="1"/>
</dbReference>
<dbReference type="PROSITE" id="PS50862">
    <property type="entry name" value="AA_TRNA_LIGASE_II"/>
    <property type="match status" value="1"/>
</dbReference>
<name>SYP_STAA2</name>
<evidence type="ECO:0000255" key="1">
    <source>
        <dbReference type="HAMAP-Rule" id="MF_01569"/>
    </source>
</evidence>
<gene>
    <name evidence="1" type="primary">proS</name>
    <name type="ordered locus">SaurJH1_1349</name>
</gene>
<protein>
    <recommendedName>
        <fullName evidence="1">Proline--tRNA ligase</fullName>
        <ecNumber evidence="1">6.1.1.15</ecNumber>
    </recommendedName>
    <alternativeName>
        <fullName evidence="1">Prolyl-tRNA synthetase</fullName>
        <shortName evidence="1">ProRS</shortName>
    </alternativeName>
</protein>
<organism>
    <name type="scientific">Staphylococcus aureus (strain JH1)</name>
    <dbReference type="NCBI Taxonomy" id="359787"/>
    <lineage>
        <taxon>Bacteria</taxon>
        <taxon>Bacillati</taxon>
        <taxon>Bacillota</taxon>
        <taxon>Bacilli</taxon>
        <taxon>Bacillales</taxon>
        <taxon>Staphylococcaceae</taxon>
        <taxon>Staphylococcus</taxon>
    </lineage>
</organism>
<sequence>MKQSKVFIPTMRDVPSEAEAQSHRLLLKSGLIKQSTSGIYSYLPLATRVLNNITAIVRQEMERIDSVEILMPALQQAELWEESGRWGAYGPELMRLQDRHGRQFALGPTHEELVTSIVRNELKSYKQLPMTLFQIQSKFRDEKRPRFGLLRGREFIMKDAYSFHADEASLDQTYQDMYQAYSRIFERVGINARPVVADSGAIGGSHTHEFMALSAIGEDTIVYSKESDYAANIEKAEVVYEPNHKHSTVQPLEKIETPNVKTAQELADFLGRPVDEIVKTMIFKVDGEYIMVLVRGHHEINDIKLKSYFGTDNIELATQDEIVNLVGANPGSLGPVIDKEIKIYADNFVQDLNNLVVGANEDGYHLINVNVGRDFNVDEYGDFRFILEGEKLSDGSGVAHFAEGIEVGQVFKLGTKYSESMNATFLDNQGKAQPLIMGCYGIGISRTLSAIVEQNHDDNGIVWPKSVTPFDLHLISINPKKDDQRELADALYAEFNTKFDVLYDDRQERAGVKFNDADLIGLPLRIVVGKRASEGIVEVKERLTGDSEEVHIDDLMTVITNKYDNLK</sequence>
<keyword id="KW-0030">Aminoacyl-tRNA synthetase</keyword>
<keyword id="KW-0067">ATP-binding</keyword>
<keyword id="KW-0963">Cytoplasm</keyword>
<keyword id="KW-0436">Ligase</keyword>
<keyword id="KW-0547">Nucleotide-binding</keyword>
<keyword id="KW-0648">Protein biosynthesis</keyword>
<comment type="function">
    <text evidence="1">Catalyzes the attachment of proline to tRNA(Pro) in a two-step reaction: proline is first activated by ATP to form Pro-AMP and then transferred to the acceptor end of tRNA(Pro). As ProRS can inadvertently accommodate and process non-cognate amino acids such as alanine and cysteine, to avoid such errors it has two additional distinct editing activities against alanine. One activity is designated as 'pretransfer' editing and involves the tRNA(Pro)-independent hydrolysis of activated Ala-AMP. The other activity is designated 'posttransfer' editing and involves deacylation of mischarged Ala-tRNA(Pro). The misacylated Cys-tRNA(Pro) is not edited by ProRS.</text>
</comment>
<comment type="catalytic activity">
    <reaction evidence="1">
        <text>tRNA(Pro) + L-proline + ATP = L-prolyl-tRNA(Pro) + AMP + diphosphate</text>
        <dbReference type="Rhea" id="RHEA:14305"/>
        <dbReference type="Rhea" id="RHEA-COMP:9700"/>
        <dbReference type="Rhea" id="RHEA-COMP:9702"/>
        <dbReference type="ChEBI" id="CHEBI:30616"/>
        <dbReference type="ChEBI" id="CHEBI:33019"/>
        <dbReference type="ChEBI" id="CHEBI:60039"/>
        <dbReference type="ChEBI" id="CHEBI:78442"/>
        <dbReference type="ChEBI" id="CHEBI:78532"/>
        <dbReference type="ChEBI" id="CHEBI:456215"/>
        <dbReference type="EC" id="6.1.1.15"/>
    </reaction>
</comment>
<comment type="subunit">
    <text evidence="1">Homodimer.</text>
</comment>
<comment type="subcellular location">
    <subcellularLocation>
        <location evidence="1">Cytoplasm</location>
    </subcellularLocation>
</comment>
<comment type="domain">
    <text evidence="1">Consists of three domains: the N-terminal catalytic domain, the editing domain and the C-terminal anticodon-binding domain.</text>
</comment>
<comment type="similarity">
    <text evidence="1">Belongs to the class-II aminoacyl-tRNA synthetase family. ProS type 1 subfamily.</text>
</comment>
<reference key="1">
    <citation type="submission" date="2007-06" db="EMBL/GenBank/DDBJ databases">
        <title>Complete sequence of chromosome of Staphylococcus aureus subsp. aureus JH1.</title>
        <authorList>
            <consortium name="US DOE Joint Genome Institute"/>
            <person name="Copeland A."/>
            <person name="Lucas S."/>
            <person name="Lapidus A."/>
            <person name="Barry K."/>
            <person name="Detter J.C."/>
            <person name="Glavina del Rio T."/>
            <person name="Hammon N."/>
            <person name="Israni S."/>
            <person name="Dalin E."/>
            <person name="Tice H."/>
            <person name="Pitluck S."/>
            <person name="Chain P."/>
            <person name="Malfatti S."/>
            <person name="Shin M."/>
            <person name="Vergez L."/>
            <person name="Schmutz J."/>
            <person name="Larimer F."/>
            <person name="Land M."/>
            <person name="Hauser L."/>
            <person name="Kyrpides N."/>
            <person name="Ivanova N."/>
            <person name="Tomasz A."/>
            <person name="Richardson P."/>
        </authorList>
    </citation>
    <scope>NUCLEOTIDE SEQUENCE [LARGE SCALE GENOMIC DNA]</scope>
    <source>
        <strain>JH1</strain>
    </source>
</reference>